<proteinExistence type="inferred from homology"/>
<name>ATPG_STAS1</name>
<evidence type="ECO:0000255" key="1">
    <source>
        <dbReference type="HAMAP-Rule" id="MF_00815"/>
    </source>
</evidence>
<sequence length="288" mass="31878">MGSLKEIDTRIKSTKKMKQITKAMNMVSSSKLRRAESNAKQFRPYMEKMQDAITAVAGSDKNSRHPMLQQREVKKSAYLVITSDKGLAGAYNANVLKHLIKDIEEKHASKDDYSIVVLGQTGVDFLKNKGYDIHDSLIDVPDQPSFKEVQAIAKKAIGLYSEGEVDEVKIYFSHFVSVLENTPSTKTVLPLSPEDSSLGHGQMSSYEFEPDKEAILSVILPQYVESLIYGTILDAKASEHATRMTAMKNASDNASEIIDDLSIQYNRARQAAITQQITEIVGGSVALE</sequence>
<reference key="1">
    <citation type="journal article" date="2005" name="Proc. Natl. Acad. Sci. U.S.A.">
        <title>Whole genome sequence of Staphylococcus saprophyticus reveals the pathogenesis of uncomplicated urinary tract infection.</title>
        <authorList>
            <person name="Kuroda M."/>
            <person name="Yamashita A."/>
            <person name="Hirakawa H."/>
            <person name="Kumano M."/>
            <person name="Morikawa K."/>
            <person name="Higashide M."/>
            <person name="Maruyama A."/>
            <person name="Inose Y."/>
            <person name="Matoba K."/>
            <person name="Toh H."/>
            <person name="Kuhara S."/>
            <person name="Hattori M."/>
            <person name="Ohta T."/>
        </authorList>
    </citation>
    <scope>NUCLEOTIDE SEQUENCE [LARGE SCALE GENOMIC DNA]</scope>
    <source>
        <strain>ATCC 15305 / DSM 20229 / NCIMB 8711 / NCTC 7292 / S-41</strain>
    </source>
</reference>
<comment type="function">
    <text evidence="1">Produces ATP from ADP in the presence of a proton gradient across the membrane. The gamma chain is believed to be important in regulating ATPase activity and the flow of protons through the CF(0) complex.</text>
</comment>
<comment type="subunit">
    <text evidence="1">F-type ATPases have 2 components, CF(1) - the catalytic core - and CF(0) - the membrane proton channel. CF(1) has five subunits: alpha(3), beta(3), gamma(1), delta(1), epsilon(1). CF(0) has three main subunits: a, b and c.</text>
</comment>
<comment type="subcellular location">
    <subcellularLocation>
        <location evidence="1">Cell membrane</location>
        <topology evidence="1">Peripheral membrane protein</topology>
    </subcellularLocation>
</comment>
<comment type="similarity">
    <text evidence="1">Belongs to the ATPase gamma chain family.</text>
</comment>
<dbReference type="EMBL" id="AP008934">
    <property type="protein sequence ID" value="BAE17925.1"/>
    <property type="molecule type" value="Genomic_DNA"/>
</dbReference>
<dbReference type="RefSeq" id="WP_011302681.1">
    <property type="nucleotide sequence ID" value="NC_007350.1"/>
</dbReference>
<dbReference type="SMR" id="Q49Z51"/>
<dbReference type="GeneID" id="3615747"/>
<dbReference type="KEGG" id="ssp:SSP0780"/>
<dbReference type="PATRIC" id="fig|342451.11.peg.782"/>
<dbReference type="eggNOG" id="COG0224">
    <property type="taxonomic scope" value="Bacteria"/>
</dbReference>
<dbReference type="HOGENOM" id="CLU_050669_0_1_9"/>
<dbReference type="OrthoDB" id="9812769at2"/>
<dbReference type="Proteomes" id="UP000006371">
    <property type="component" value="Chromosome"/>
</dbReference>
<dbReference type="GO" id="GO:0005886">
    <property type="term" value="C:plasma membrane"/>
    <property type="evidence" value="ECO:0007669"/>
    <property type="project" value="UniProtKB-SubCell"/>
</dbReference>
<dbReference type="GO" id="GO:0045259">
    <property type="term" value="C:proton-transporting ATP synthase complex"/>
    <property type="evidence" value="ECO:0007669"/>
    <property type="project" value="UniProtKB-KW"/>
</dbReference>
<dbReference type="GO" id="GO:0005524">
    <property type="term" value="F:ATP binding"/>
    <property type="evidence" value="ECO:0007669"/>
    <property type="project" value="UniProtKB-UniRule"/>
</dbReference>
<dbReference type="GO" id="GO:0046933">
    <property type="term" value="F:proton-transporting ATP synthase activity, rotational mechanism"/>
    <property type="evidence" value="ECO:0007669"/>
    <property type="project" value="UniProtKB-UniRule"/>
</dbReference>
<dbReference type="GO" id="GO:0042777">
    <property type="term" value="P:proton motive force-driven plasma membrane ATP synthesis"/>
    <property type="evidence" value="ECO:0007669"/>
    <property type="project" value="UniProtKB-UniRule"/>
</dbReference>
<dbReference type="CDD" id="cd12151">
    <property type="entry name" value="F1-ATPase_gamma"/>
    <property type="match status" value="1"/>
</dbReference>
<dbReference type="FunFam" id="1.10.287.80:FF:000019">
    <property type="entry name" value="ATP synthase gamma chain"/>
    <property type="match status" value="1"/>
</dbReference>
<dbReference type="FunFam" id="3.40.1380.10:FF:000002">
    <property type="entry name" value="ATP synthase gamma chain"/>
    <property type="match status" value="1"/>
</dbReference>
<dbReference type="Gene3D" id="3.40.1380.10">
    <property type="match status" value="1"/>
</dbReference>
<dbReference type="Gene3D" id="1.10.287.80">
    <property type="entry name" value="ATP synthase, gamma subunit, helix hairpin domain"/>
    <property type="match status" value="2"/>
</dbReference>
<dbReference type="HAMAP" id="MF_00815">
    <property type="entry name" value="ATP_synth_gamma_bact"/>
    <property type="match status" value="1"/>
</dbReference>
<dbReference type="InterPro" id="IPR035968">
    <property type="entry name" value="ATP_synth_F1_ATPase_gsu"/>
</dbReference>
<dbReference type="InterPro" id="IPR000131">
    <property type="entry name" value="ATP_synth_F1_gsu"/>
</dbReference>
<dbReference type="NCBIfam" id="TIGR01146">
    <property type="entry name" value="ATPsyn_F1gamma"/>
    <property type="match status" value="1"/>
</dbReference>
<dbReference type="PANTHER" id="PTHR11693">
    <property type="entry name" value="ATP SYNTHASE GAMMA CHAIN"/>
    <property type="match status" value="1"/>
</dbReference>
<dbReference type="PANTHER" id="PTHR11693:SF22">
    <property type="entry name" value="ATP SYNTHASE SUBUNIT GAMMA, MITOCHONDRIAL"/>
    <property type="match status" value="1"/>
</dbReference>
<dbReference type="Pfam" id="PF00231">
    <property type="entry name" value="ATP-synt"/>
    <property type="match status" value="1"/>
</dbReference>
<dbReference type="PRINTS" id="PR00126">
    <property type="entry name" value="ATPASEGAMMA"/>
</dbReference>
<dbReference type="SUPFAM" id="SSF52943">
    <property type="entry name" value="ATP synthase (F1-ATPase), gamma subunit"/>
    <property type="match status" value="1"/>
</dbReference>
<organism>
    <name type="scientific">Staphylococcus saprophyticus subsp. saprophyticus (strain ATCC 15305 / DSM 20229 / NCIMB 8711 / NCTC 7292 / S-41)</name>
    <dbReference type="NCBI Taxonomy" id="342451"/>
    <lineage>
        <taxon>Bacteria</taxon>
        <taxon>Bacillati</taxon>
        <taxon>Bacillota</taxon>
        <taxon>Bacilli</taxon>
        <taxon>Bacillales</taxon>
        <taxon>Staphylococcaceae</taxon>
        <taxon>Staphylococcus</taxon>
    </lineage>
</organism>
<gene>
    <name evidence="1" type="primary">atpG</name>
    <name type="ordered locus">SSP0780</name>
</gene>
<accession>Q49Z51</accession>
<keyword id="KW-0066">ATP synthesis</keyword>
<keyword id="KW-1003">Cell membrane</keyword>
<keyword id="KW-0139">CF(1)</keyword>
<keyword id="KW-0375">Hydrogen ion transport</keyword>
<keyword id="KW-0406">Ion transport</keyword>
<keyword id="KW-0472">Membrane</keyword>
<keyword id="KW-1185">Reference proteome</keyword>
<keyword id="KW-0813">Transport</keyword>
<feature type="chain" id="PRO_0000073382" description="ATP synthase gamma chain">
    <location>
        <begin position="1"/>
        <end position="288"/>
    </location>
</feature>
<protein>
    <recommendedName>
        <fullName evidence="1">ATP synthase gamma chain</fullName>
    </recommendedName>
    <alternativeName>
        <fullName evidence="1">ATP synthase F1 sector gamma subunit</fullName>
    </alternativeName>
    <alternativeName>
        <fullName evidence="1">F-ATPase gamma subunit</fullName>
    </alternativeName>
</protein>